<sequence length="549" mass="59768">MTSQEYEPIQWSDESQTNNDSVNDAYADVNTTHESRRRTTLQPNSTSQSMIGTLRKYARFIGPGLMVSVSYMDPGNYSTAVAAGSAHRYKLLFSVLVSNFMAAFWQYLCARLGAVTGLDLAQNCKKHLPFGLNITLYILAEMAIIATDLAEVVGTAISLNILFHIPLALGVILTVVDVLIVLLAYKPNGSMKGIRIFEAFVSLLVVLTVVCFTVELFYAKLGPAKEIFSGFLPSKAVFEGDGLYLSLAILGATVMPHSLYLGSGVVQPRLREYDIKNGHYLPDANDMDNNHDNYRPSYEAISETLHFTITELLISLFTVALFVNCAILIVSGATLYGSTQNAEEADLFSIYNLLCSTLSKGAGTVFVLALLFSGQSAGIVCTLSGQMVSEGFLNWTVSPALRRSATRAVAITPCLILVLVAGRSGLSGALNASQVVLSLLLPFVSAPLLYFTSSKKIMRVQLNRTKELSRTTDKKPVADRTEDDETIELEEMGIGSSSQERSLVSPAPEYKDMSNGMIVTVLAIIVWLIISGLNFYMLLGFTTGKEVHL</sequence>
<gene>
    <name type="primary">SMF2</name>
    <name type="ordered locus">YHR050W</name>
</gene>
<name>SMF2_YEAST</name>
<reference key="1">
    <citation type="journal article" date="1992" name="J. Biol. Chem.">
        <title>Two related genes encoding extremely hydrophobic proteins suppress a lethal mutation in the yeast mitochondrial processing enhancing protein.</title>
        <authorList>
            <person name="West A.H."/>
            <person name="Clark D.J."/>
            <person name="Martin J."/>
            <person name="Neupert W."/>
            <person name="Hartl F.-U."/>
            <person name="Horwich A.L."/>
        </authorList>
    </citation>
    <scope>NUCLEOTIDE SEQUENCE [GENOMIC DNA]</scope>
</reference>
<reference key="2">
    <citation type="journal article" date="1994" name="Science">
        <title>Complete nucleotide sequence of Saccharomyces cerevisiae chromosome VIII.</title>
        <authorList>
            <person name="Johnston M."/>
            <person name="Andrews S."/>
            <person name="Brinkman R."/>
            <person name="Cooper J."/>
            <person name="Ding H."/>
            <person name="Dover J."/>
            <person name="Du Z."/>
            <person name="Favello A."/>
            <person name="Fulton L."/>
            <person name="Gattung S."/>
            <person name="Geisel C."/>
            <person name="Kirsten J."/>
            <person name="Kucaba T."/>
            <person name="Hillier L.W."/>
            <person name="Jier M."/>
            <person name="Johnston L."/>
            <person name="Langston Y."/>
            <person name="Latreille P."/>
            <person name="Louis E.J."/>
            <person name="Macri C."/>
            <person name="Mardis E."/>
            <person name="Menezes S."/>
            <person name="Mouser L."/>
            <person name="Nhan M."/>
            <person name="Rifkin L."/>
            <person name="Riles L."/>
            <person name="St Peter H."/>
            <person name="Trevaskis E."/>
            <person name="Vaughan K."/>
            <person name="Vignati D."/>
            <person name="Wilcox L."/>
            <person name="Wohldman P."/>
            <person name="Waterston R."/>
            <person name="Wilson R."/>
            <person name="Vaudin M."/>
        </authorList>
    </citation>
    <scope>NUCLEOTIDE SEQUENCE [LARGE SCALE GENOMIC DNA]</scope>
    <source>
        <strain>ATCC 204508 / S288c</strain>
    </source>
</reference>
<reference key="3">
    <citation type="journal article" date="2014" name="G3 (Bethesda)">
        <title>The reference genome sequence of Saccharomyces cerevisiae: Then and now.</title>
        <authorList>
            <person name="Engel S.R."/>
            <person name="Dietrich F.S."/>
            <person name="Fisk D.G."/>
            <person name="Binkley G."/>
            <person name="Balakrishnan R."/>
            <person name="Costanzo M.C."/>
            <person name="Dwight S.S."/>
            <person name="Hitz B.C."/>
            <person name="Karra K."/>
            <person name="Nash R.S."/>
            <person name="Weng S."/>
            <person name="Wong E.D."/>
            <person name="Lloyd P."/>
            <person name="Skrzypek M.S."/>
            <person name="Miyasato S.R."/>
            <person name="Simison M."/>
            <person name="Cherry J.M."/>
        </authorList>
    </citation>
    <scope>GENOME REANNOTATION</scope>
    <source>
        <strain>ATCC 204508 / S288c</strain>
    </source>
</reference>
<reference key="4">
    <citation type="journal article" date="2000" name="J. Biol. Chem.">
        <title>The family of SMF metal ion transporters in yeast cells.</title>
        <authorList>
            <person name="Cohen A."/>
            <person name="Nelson H."/>
            <person name="Nelson N."/>
        </authorList>
    </citation>
    <scope>FUNCTION</scope>
</reference>
<reference key="5">
    <citation type="journal article" date="2000" name="Mol. Cell. Biol.">
        <title>Saccharomyces cerevisiae expresses three functionally distinct homologues of the nramp family of metal transporters.</title>
        <authorList>
            <person name="Portnoy M.E."/>
            <person name="Liu X.F."/>
            <person name="Culotta V.C."/>
        </authorList>
    </citation>
    <scope>SUBCELLULAR LOCATION</scope>
    <scope>INDUCTION</scope>
</reference>
<reference key="6">
    <citation type="journal article" date="2003" name="J. Biol. Chem.">
        <title>The Saccharomyces cerevisiae high affinity phosphate transporter encoded by PHO84 also functions in manganese homeostasis.</title>
        <authorList>
            <person name="Jensen L.T."/>
            <person name="Ajua-Alemanji M."/>
            <person name="Culotta V.C."/>
        </authorList>
    </citation>
    <scope>FUNCTION</scope>
    <scope>TRANSPORTER ACTIVITY</scope>
    <scope>DISRUPTION PHENOTYPE</scope>
</reference>
<organism>
    <name type="scientific">Saccharomyces cerevisiae (strain ATCC 204508 / S288c)</name>
    <name type="common">Baker's yeast</name>
    <dbReference type="NCBI Taxonomy" id="559292"/>
    <lineage>
        <taxon>Eukaryota</taxon>
        <taxon>Fungi</taxon>
        <taxon>Dikarya</taxon>
        <taxon>Ascomycota</taxon>
        <taxon>Saccharomycotina</taxon>
        <taxon>Saccharomycetes</taxon>
        <taxon>Saccharomycetales</taxon>
        <taxon>Saccharomycetaceae</taxon>
        <taxon>Saccharomyces</taxon>
    </lineage>
</organism>
<keyword id="KW-1003">Cell membrane</keyword>
<keyword id="KW-0464">Manganese</keyword>
<keyword id="KW-0472">Membrane</keyword>
<keyword id="KW-0479">Metal-binding</keyword>
<keyword id="KW-1185">Reference proteome</keyword>
<keyword id="KW-0812">Transmembrane</keyword>
<keyword id="KW-1133">Transmembrane helix</keyword>
<keyword id="KW-0813">Transport</keyword>
<keyword id="KW-0926">Vacuole</keyword>
<dbReference type="EMBL" id="U00062">
    <property type="protein sequence ID" value="AAB68900.1"/>
    <property type="molecule type" value="Genomic_DNA"/>
</dbReference>
<dbReference type="EMBL" id="BK006934">
    <property type="protein sequence ID" value="DAA06742.1"/>
    <property type="molecule type" value="Genomic_DNA"/>
</dbReference>
<dbReference type="PIR" id="B45154">
    <property type="entry name" value="B45154"/>
</dbReference>
<dbReference type="RefSeq" id="NP_011917.1">
    <property type="nucleotide sequence ID" value="NM_001179180.1"/>
</dbReference>
<dbReference type="SMR" id="P38778"/>
<dbReference type="BioGRID" id="36482">
    <property type="interactions" value="109"/>
</dbReference>
<dbReference type="DIP" id="DIP-4171N"/>
<dbReference type="FunCoup" id="P38778">
    <property type="interactions" value="367"/>
</dbReference>
<dbReference type="IntAct" id="P38778">
    <property type="interactions" value="2"/>
</dbReference>
<dbReference type="MINT" id="P38778"/>
<dbReference type="STRING" id="4932.YHR050W"/>
<dbReference type="TCDB" id="2.A.55.1.2">
    <property type="family name" value="the metal ion (mn(2+)-iron) transporter (nramp) family"/>
</dbReference>
<dbReference type="GlyGen" id="P38778">
    <property type="glycosylation" value="1 site"/>
</dbReference>
<dbReference type="iPTMnet" id="P38778"/>
<dbReference type="PaxDb" id="4932-YHR050W"/>
<dbReference type="PeptideAtlas" id="P38778"/>
<dbReference type="EnsemblFungi" id="YHR050W_mRNA">
    <property type="protein sequence ID" value="YHR050W"/>
    <property type="gene ID" value="YHR050W"/>
</dbReference>
<dbReference type="GeneID" id="856447"/>
<dbReference type="KEGG" id="sce:YHR050W"/>
<dbReference type="AGR" id="SGD:S000001092"/>
<dbReference type="SGD" id="S000001092">
    <property type="gene designation" value="SMF2"/>
</dbReference>
<dbReference type="VEuPathDB" id="FungiDB:YHR050W"/>
<dbReference type="eggNOG" id="KOG1291">
    <property type="taxonomic scope" value="Eukaryota"/>
</dbReference>
<dbReference type="GeneTree" id="ENSGT00970000196577"/>
<dbReference type="HOGENOM" id="CLU_020088_4_1_1"/>
<dbReference type="InParanoid" id="P38778"/>
<dbReference type="OMA" id="AQNCKKH"/>
<dbReference type="OrthoDB" id="409173at2759"/>
<dbReference type="BioCyc" id="YEAST:G3O-31105-MONOMER"/>
<dbReference type="BioGRID-ORCS" id="856447">
    <property type="hits" value="3 hits in 10 CRISPR screens"/>
</dbReference>
<dbReference type="PRO" id="PR:P38778"/>
<dbReference type="Proteomes" id="UP000002311">
    <property type="component" value="Chromosome VIII"/>
</dbReference>
<dbReference type="RNAct" id="P38778">
    <property type="molecule type" value="protein"/>
</dbReference>
<dbReference type="GO" id="GO:0005770">
    <property type="term" value="C:late endosome"/>
    <property type="evidence" value="ECO:0000314"/>
    <property type="project" value="SGD"/>
</dbReference>
<dbReference type="GO" id="GO:0005739">
    <property type="term" value="C:mitochondrion"/>
    <property type="evidence" value="ECO:0007005"/>
    <property type="project" value="SGD"/>
</dbReference>
<dbReference type="GO" id="GO:0005886">
    <property type="term" value="C:plasma membrane"/>
    <property type="evidence" value="ECO:0000318"/>
    <property type="project" value="GO_Central"/>
</dbReference>
<dbReference type="GO" id="GO:0005802">
    <property type="term" value="C:trans-Golgi network"/>
    <property type="evidence" value="ECO:0000314"/>
    <property type="project" value="SGD"/>
</dbReference>
<dbReference type="GO" id="GO:0005775">
    <property type="term" value="C:vacuolar lumen"/>
    <property type="evidence" value="ECO:0007669"/>
    <property type="project" value="UniProtKB-SubCell"/>
</dbReference>
<dbReference type="GO" id="GO:0015086">
    <property type="term" value="F:cadmium ion transmembrane transporter activity"/>
    <property type="evidence" value="ECO:0000318"/>
    <property type="project" value="GO_Central"/>
</dbReference>
<dbReference type="GO" id="GO:0022890">
    <property type="term" value="F:inorganic cation transmembrane transporter activity"/>
    <property type="evidence" value="ECO:0000314"/>
    <property type="project" value="SGD"/>
</dbReference>
<dbReference type="GO" id="GO:0005384">
    <property type="term" value="F:manganese ion transmembrane transporter activity"/>
    <property type="evidence" value="ECO:0000318"/>
    <property type="project" value="GO_Central"/>
</dbReference>
<dbReference type="GO" id="GO:0046872">
    <property type="term" value="F:metal ion binding"/>
    <property type="evidence" value="ECO:0007669"/>
    <property type="project" value="UniProtKB-KW"/>
</dbReference>
<dbReference type="GO" id="GO:0006824">
    <property type="term" value="P:cobalt ion transport"/>
    <property type="evidence" value="ECO:0000316"/>
    <property type="project" value="SGD"/>
</dbReference>
<dbReference type="GO" id="GO:0006877">
    <property type="term" value="P:intracellular cobalt ion homeostasis"/>
    <property type="evidence" value="ECO:0000316"/>
    <property type="project" value="SGD"/>
</dbReference>
<dbReference type="GO" id="GO:0030026">
    <property type="term" value="P:intracellular manganese ion homeostasis"/>
    <property type="evidence" value="ECO:0000315"/>
    <property type="project" value="SGD"/>
</dbReference>
<dbReference type="GO" id="GO:0034755">
    <property type="term" value="P:iron ion transmembrane transport"/>
    <property type="evidence" value="ECO:0000318"/>
    <property type="project" value="GO_Central"/>
</dbReference>
<dbReference type="GO" id="GO:0006828">
    <property type="term" value="P:manganese ion transport"/>
    <property type="evidence" value="ECO:0000315"/>
    <property type="project" value="SGD"/>
</dbReference>
<dbReference type="HAMAP" id="MF_00221">
    <property type="entry name" value="NRAMP"/>
    <property type="match status" value="1"/>
</dbReference>
<dbReference type="InterPro" id="IPR001046">
    <property type="entry name" value="NRAMP_fam"/>
</dbReference>
<dbReference type="NCBIfam" id="TIGR01197">
    <property type="entry name" value="nramp"/>
    <property type="match status" value="1"/>
</dbReference>
<dbReference type="NCBIfam" id="NF037982">
    <property type="entry name" value="Nramp_1"/>
    <property type="match status" value="1"/>
</dbReference>
<dbReference type="PANTHER" id="PTHR11706:SF50">
    <property type="entry name" value="MANGANESE TRANSPORTER SMF2"/>
    <property type="match status" value="1"/>
</dbReference>
<dbReference type="PANTHER" id="PTHR11706">
    <property type="entry name" value="SOLUTE CARRIER PROTEIN FAMILY 11 MEMBER"/>
    <property type="match status" value="1"/>
</dbReference>
<dbReference type="Pfam" id="PF01566">
    <property type="entry name" value="Nramp"/>
    <property type="match status" value="1"/>
</dbReference>
<dbReference type="PRINTS" id="PR00447">
    <property type="entry name" value="NATRESASSCMP"/>
</dbReference>
<feature type="chain" id="PRO_0000212606" description="Manganese transporter SMF2">
    <location>
        <begin position="1"/>
        <end position="549"/>
    </location>
</feature>
<feature type="transmembrane region" description="Helical" evidence="1">
    <location>
        <begin position="91"/>
        <end position="109"/>
    </location>
</feature>
<feature type="transmembrane region" description="Helical" evidence="1">
    <location>
        <begin position="130"/>
        <end position="147"/>
    </location>
</feature>
<feature type="transmembrane region" description="Helical" evidence="1">
    <location>
        <begin position="161"/>
        <end position="185"/>
    </location>
</feature>
<feature type="transmembrane region" description="Helical" evidence="1">
    <location>
        <begin position="196"/>
        <end position="214"/>
    </location>
</feature>
<feature type="transmembrane region" description="Helical" evidence="1">
    <location>
        <begin position="312"/>
        <end position="332"/>
    </location>
</feature>
<feature type="transmembrane region" description="Helical" evidence="1">
    <location>
        <begin position="350"/>
        <end position="372"/>
    </location>
</feature>
<feature type="transmembrane region" description="Helical" evidence="1">
    <location>
        <begin position="432"/>
        <end position="452"/>
    </location>
</feature>
<feature type="transmembrane region" description="Helical" evidence="1">
    <location>
        <begin position="521"/>
        <end position="541"/>
    </location>
</feature>
<feature type="region of interest" description="Disordered" evidence="2">
    <location>
        <begin position="1"/>
        <end position="23"/>
    </location>
</feature>
<feature type="compositionally biased region" description="Polar residues" evidence="2">
    <location>
        <begin position="12"/>
        <end position="22"/>
    </location>
</feature>
<comment type="function">
    <text evidence="3 5">High-affinity manganese transporter involved in manganese uptake from the extracellular environment.</text>
</comment>
<comment type="catalytic activity">
    <reaction evidence="5">
        <text>Mn(2+)(in) = Mn(2+)(out)</text>
        <dbReference type="Rhea" id="RHEA:28699"/>
        <dbReference type="ChEBI" id="CHEBI:29035"/>
    </reaction>
    <physiologicalReaction direction="right-to-left" evidence="6">
        <dbReference type="Rhea" id="RHEA:28701"/>
    </physiologicalReaction>
</comment>
<comment type="subcellular location">
    <subcellularLocation>
        <location evidence="4">Vacuole lumen</location>
    </subcellularLocation>
    <subcellularLocation>
        <location evidence="6">Vesicle</location>
    </subcellularLocation>
    <subcellularLocation>
        <location evidence="6">Cell membrane</location>
        <topology evidence="1">Multi-pass membrane protein</topology>
    </subcellularLocation>
    <text evidence="4">In the presence of excess manganese, targeted to the vacuolar lumen, where it is degraded (PubMed:11027260). Under metal starvation conditions, localization is restricted to intracellular punctate bodies (PubMed:11027260).</text>
</comment>
<comment type="induction">
    <text evidence="4">Up-regulated under metal starvation conditions (at protein level) (PubMed:11027260). Down-regulated after addition of manganese or iron to the medium (at protein level) (PubMed:11027260). Expression is not changed under metal starvation conditions (PubMed:11027260).</text>
</comment>
<comment type="disruption phenotype">
    <text evidence="5">Decreased manganese uptake.</text>
</comment>
<comment type="similarity">
    <text evidence="6">Belongs to the NRAMP family.</text>
</comment>
<evidence type="ECO:0000255" key="1"/>
<evidence type="ECO:0000256" key="2">
    <source>
        <dbReference type="SAM" id="MobiDB-lite"/>
    </source>
</evidence>
<evidence type="ECO:0000269" key="3">
    <source>
    </source>
</evidence>
<evidence type="ECO:0000269" key="4">
    <source>
    </source>
</evidence>
<evidence type="ECO:0000269" key="5">
    <source>
    </source>
</evidence>
<evidence type="ECO:0000305" key="6"/>
<proteinExistence type="evidence at protein level"/>
<accession>P38778</accession>
<accession>D3DKZ8</accession>
<protein>
    <recommendedName>
        <fullName>Manganese transporter SMF2</fullName>
    </recommendedName>
</protein>